<gene>
    <name type="primary">ITPK3</name>
    <name type="ordered locus">At4g08170</name>
    <name type="ORF">T12G13.10</name>
</gene>
<keyword id="KW-0025">Alternative splicing</keyword>
<keyword id="KW-0067">ATP-binding</keyword>
<keyword id="KW-0418">Kinase</keyword>
<keyword id="KW-0460">Magnesium</keyword>
<keyword id="KW-0479">Metal-binding</keyword>
<keyword id="KW-0547">Nucleotide-binding</keyword>
<keyword id="KW-1185">Reference proteome</keyword>
<keyword id="KW-0808">Transferase</keyword>
<organism>
    <name type="scientific">Arabidopsis thaliana</name>
    <name type="common">Mouse-ear cress</name>
    <dbReference type="NCBI Taxonomy" id="3702"/>
    <lineage>
        <taxon>Eukaryota</taxon>
        <taxon>Viridiplantae</taxon>
        <taxon>Streptophyta</taxon>
        <taxon>Embryophyta</taxon>
        <taxon>Tracheophyta</taxon>
        <taxon>Spermatophyta</taxon>
        <taxon>Magnoliopsida</taxon>
        <taxon>eudicotyledons</taxon>
        <taxon>Gunneridae</taxon>
        <taxon>Pentapetalae</taxon>
        <taxon>rosids</taxon>
        <taxon>malvids</taxon>
        <taxon>Brassicales</taxon>
        <taxon>Brassicaceae</taxon>
        <taxon>Camelineae</taxon>
        <taxon>Arabidopsis</taxon>
    </lineage>
</organism>
<feature type="chain" id="PRO_0000220840" description="Inositol-tetrakisphosphate 1-kinase 3">
    <location>
        <begin position="1"/>
        <end position="353"/>
    </location>
</feature>
<feature type="domain" description="ATP-grasp" evidence="3">
    <location>
        <begin position="138"/>
        <end position="350"/>
    </location>
</feature>
<feature type="region of interest" description="Disordered" evidence="4">
    <location>
        <begin position="1"/>
        <end position="25"/>
    </location>
</feature>
<feature type="binding site" evidence="2">
    <location>
        <position position="50"/>
    </location>
    <ligand>
        <name>1D-myo-inositol 1,3,4-trisphosphate</name>
        <dbReference type="ChEBI" id="CHEBI:58414"/>
    </ligand>
</feature>
<feature type="binding site" evidence="2">
    <location>
        <position position="92"/>
    </location>
    <ligand>
        <name>1D-myo-inositol 1,3,4-trisphosphate</name>
        <dbReference type="ChEBI" id="CHEBI:58414"/>
    </ligand>
</feature>
<feature type="binding site" evidence="1">
    <location>
        <position position="127"/>
    </location>
    <ligand>
        <name>ATP</name>
        <dbReference type="ChEBI" id="CHEBI:30616"/>
    </ligand>
</feature>
<feature type="binding site" evidence="1">
    <location>
        <position position="177"/>
    </location>
    <ligand>
        <name>ATP</name>
        <dbReference type="ChEBI" id="CHEBI:30616"/>
    </ligand>
</feature>
<feature type="binding site" evidence="2">
    <location>
        <position position="188"/>
    </location>
    <ligand>
        <name>1D-myo-inositol 1,3,4-trisphosphate</name>
        <dbReference type="ChEBI" id="CHEBI:58414"/>
    </ligand>
</feature>
<feature type="binding site" evidence="1">
    <location>
        <begin position="209"/>
        <end position="220"/>
    </location>
    <ligand>
        <name>ATP</name>
        <dbReference type="ChEBI" id="CHEBI:30616"/>
    </ligand>
</feature>
<feature type="binding site" evidence="2">
    <location>
        <position position="220"/>
    </location>
    <ligand>
        <name>1D-myo-inositol 1,3,4-trisphosphate</name>
        <dbReference type="ChEBI" id="CHEBI:58414"/>
    </ligand>
</feature>
<feature type="binding site" evidence="1">
    <location>
        <position position="235"/>
    </location>
    <ligand>
        <name>ATP</name>
        <dbReference type="ChEBI" id="CHEBI:30616"/>
    </ligand>
</feature>
<feature type="binding site" evidence="1">
    <location>
        <position position="300"/>
    </location>
    <ligand>
        <name>Mg(2+)</name>
        <dbReference type="ChEBI" id="CHEBI:18420"/>
        <label>1</label>
    </ligand>
</feature>
<feature type="binding site" evidence="1">
    <location>
        <position position="315"/>
    </location>
    <ligand>
        <name>Mg(2+)</name>
        <dbReference type="ChEBI" id="CHEBI:18420"/>
        <label>1</label>
    </ligand>
</feature>
<feature type="binding site" evidence="1">
    <location>
        <position position="315"/>
    </location>
    <ligand>
        <name>Mg(2+)</name>
        <dbReference type="ChEBI" id="CHEBI:18420"/>
        <label>2</label>
    </ligand>
</feature>
<feature type="binding site" evidence="2">
    <location>
        <position position="317"/>
    </location>
    <ligand>
        <name>1D-myo-inositol 1,3,4-trisphosphate</name>
        <dbReference type="ChEBI" id="CHEBI:58414"/>
    </ligand>
</feature>
<feature type="binding site" evidence="1">
    <location>
        <position position="317"/>
    </location>
    <ligand>
        <name>Mg(2+)</name>
        <dbReference type="ChEBI" id="CHEBI:18420"/>
        <label>2</label>
    </ligand>
</feature>
<feature type="splice variant" id="VSP_018095" description="In isoform 2." evidence="7">
    <location>
        <begin position="1"/>
        <end position="88"/>
    </location>
</feature>
<feature type="splice variant" id="VSP_018096" description="In isoform 2." evidence="7">
    <original>VLHK</original>
    <variation>MYWQ</variation>
    <location>
        <begin position="89"/>
        <end position="92"/>
    </location>
</feature>
<dbReference type="EC" id="2.7.1.134" evidence="5"/>
<dbReference type="EC" id="2.7.1.159" evidence="5"/>
<dbReference type="EMBL" id="AL080252">
    <property type="protein sequence ID" value="CAB45787.1"/>
    <property type="status" value="ALT_SEQ"/>
    <property type="molecule type" value="Genomic_DNA"/>
</dbReference>
<dbReference type="EMBL" id="AL161510">
    <property type="protein sequence ID" value="CAB81153.1"/>
    <property type="status" value="ALT_SEQ"/>
    <property type="molecule type" value="Genomic_DNA"/>
</dbReference>
<dbReference type="EMBL" id="CP002687">
    <property type="protein sequence ID" value="AEE82601.1"/>
    <property type="molecule type" value="Genomic_DNA"/>
</dbReference>
<dbReference type="EMBL" id="CP002687">
    <property type="protein sequence ID" value="AEE82602.1"/>
    <property type="molecule type" value="Genomic_DNA"/>
</dbReference>
<dbReference type="EMBL" id="AY050408">
    <property type="protein sequence ID" value="AAK91424.1"/>
    <property type="molecule type" value="mRNA"/>
</dbReference>
<dbReference type="EMBL" id="AY058241">
    <property type="protein sequence ID" value="AAL15415.1"/>
    <property type="molecule type" value="mRNA"/>
</dbReference>
<dbReference type="PIR" id="T10544">
    <property type="entry name" value="T10544"/>
</dbReference>
<dbReference type="RefSeq" id="NP_001319879.1">
    <molecule id="Q9SUG3-2"/>
    <property type="nucleotide sequence ID" value="NM_001340572.1"/>
</dbReference>
<dbReference type="RefSeq" id="NP_567334.1">
    <molecule id="Q9SUG3-1"/>
    <property type="nucleotide sequence ID" value="NM_116886.3"/>
</dbReference>
<dbReference type="SMR" id="Q9SUG3"/>
<dbReference type="BioGRID" id="11667">
    <property type="interactions" value="4"/>
</dbReference>
<dbReference type="FunCoup" id="Q9SUG3">
    <property type="interactions" value="947"/>
</dbReference>
<dbReference type="STRING" id="3702.Q9SUG3"/>
<dbReference type="PaxDb" id="3702-AT4G08170.2"/>
<dbReference type="ProteomicsDB" id="238959">
    <molecule id="Q9SUG3-1"/>
</dbReference>
<dbReference type="EnsemblPlants" id="AT4G08170.1">
    <molecule id="Q9SUG3-2"/>
    <property type="protein sequence ID" value="AT4G08170.1"/>
    <property type="gene ID" value="AT4G08170"/>
</dbReference>
<dbReference type="EnsemblPlants" id="AT4G08170.2">
    <molecule id="Q9SUG3-1"/>
    <property type="protein sequence ID" value="AT4G08170.2"/>
    <property type="gene ID" value="AT4G08170"/>
</dbReference>
<dbReference type="GeneID" id="826367"/>
<dbReference type="Gramene" id="AT4G08170.1">
    <molecule id="Q9SUG3-2"/>
    <property type="protein sequence ID" value="AT4G08170.1"/>
    <property type="gene ID" value="AT4G08170"/>
</dbReference>
<dbReference type="Gramene" id="AT4G08170.2">
    <molecule id="Q9SUG3-1"/>
    <property type="protein sequence ID" value="AT4G08170.2"/>
    <property type="gene ID" value="AT4G08170"/>
</dbReference>
<dbReference type="KEGG" id="ath:AT4G08170"/>
<dbReference type="Araport" id="AT4G08170"/>
<dbReference type="TAIR" id="AT4G08170">
    <property type="gene designation" value="ITPK3"/>
</dbReference>
<dbReference type="eggNOG" id="ENOG502QQS1">
    <property type="taxonomic scope" value="Eukaryota"/>
</dbReference>
<dbReference type="HOGENOM" id="CLU_041857_0_0_1"/>
<dbReference type="InParanoid" id="Q9SUG3"/>
<dbReference type="OMA" id="QHLYNRQ"/>
<dbReference type="PhylomeDB" id="Q9SUG3"/>
<dbReference type="BioCyc" id="ARA:AT4G08170-MONOMER"/>
<dbReference type="BRENDA" id="2.7.1.134">
    <property type="organism ID" value="399"/>
</dbReference>
<dbReference type="BRENDA" id="2.7.1.159">
    <property type="organism ID" value="399"/>
</dbReference>
<dbReference type="PRO" id="PR:Q9SUG3"/>
<dbReference type="Proteomes" id="UP000006548">
    <property type="component" value="Chromosome 4"/>
</dbReference>
<dbReference type="ExpressionAtlas" id="Q9SUG3">
    <property type="expression patterns" value="baseline and differential"/>
</dbReference>
<dbReference type="GO" id="GO:0005737">
    <property type="term" value="C:cytoplasm"/>
    <property type="evidence" value="ECO:0007005"/>
    <property type="project" value="TAIR"/>
</dbReference>
<dbReference type="GO" id="GO:0005634">
    <property type="term" value="C:nucleus"/>
    <property type="evidence" value="ECO:0007005"/>
    <property type="project" value="TAIR"/>
</dbReference>
<dbReference type="GO" id="GO:0005524">
    <property type="term" value="F:ATP binding"/>
    <property type="evidence" value="ECO:0007669"/>
    <property type="project" value="UniProtKB-KW"/>
</dbReference>
<dbReference type="GO" id="GO:0052726">
    <property type="term" value="F:inositol-1,3,4-trisphosphate 5-kinase activity"/>
    <property type="evidence" value="ECO:0000314"/>
    <property type="project" value="UniProtKB"/>
</dbReference>
<dbReference type="GO" id="GO:0052725">
    <property type="term" value="F:inositol-1,3,4-trisphosphate 6-kinase activity"/>
    <property type="evidence" value="ECO:0000314"/>
    <property type="project" value="UniProtKB"/>
</dbReference>
<dbReference type="GO" id="GO:0047325">
    <property type="term" value="F:inositol-3,4,5,6-tetrakisphosphate 1-kinase activity"/>
    <property type="evidence" value="ECO:0000314"/>
    <property type="project" value="UniProtKB"/>
</dbReference>
<dbReference type="GO" id="GO:0000287">
    <property type="term" value="F:magnesium ion binding"/>
    <property type="evidence" value="ECO:0007669"/>
    <property type="project" value="InterPro"/>
</dbReference>
<dbReference type="GO" id="GO:0032957">
    <property type="term" value="P:inositol trisphosphate metabolic process"/>
    <property type="evidence" value="ECO:0007669"/>
    <property type="project" value="InterPro"/>
</dbReference>
<dbReference type="GO" id="GO:0009611">
    <property type="term" value="P:response to wounding"/>
    <property type="evidence" value="ECO:0000270"/>
    <property type="project" value="TAIR"/>
</dbReference>
<dbReference type="Gene3D" id="3.30.470.20">
    <property type="entry name" value="ATP-grasp fold, B domain"/>
    <property type="match status" value="1"/>
</dbReference>
<dbReference type="InterPro" id="IPR011761">
    <property type="entry name" value="ATP-grasp"/>
</dbReference>
<dbReference type="InterPro" id="IPR008656">
    <property type="entry name" value="Inositol_tetrakis-P_1-kinase"/>
</dbReference>
<dbReference type="InterPro" id="IPR040464">
    <property type="entry name" value="InsP(3)kin_ATP-grasp"/>
</dbReference>
<dbReference type="InterPro" id="IPR041429">
    <property type="entry name" value="ITPK1_N"/>
</dbReference>
<dbReference type="PANTHER" id="PTHR14217">
    <property type="entry name" value="INOSITOL-TETRAKISPHOSPHATE 1-KINASE"/>
    <property type="match status" value="1"/>
</dbReference>
<dbReference type="PANTHER" id="PTHR14217:SF39">
    <property type="entry name" value="INOSITOL-TETRAKISPHOSPHATE 1-KINASE 3"/>
    <property type="match status" value="1"/>
</dbReference>
<dbReference type="Pfam" id="PF05770">
    <property type="entry name" value="Ins134_P3_kin"/>
    <property type="match status" value="1"/>
</dbReference>
<dbReference type="Pfam" id="PF17927">
    <property type="entry name" value="Ins134_P3_kin_N"/>
    <property type="match status" value="1"/>
</dbReference>
<dbReference type="PIRSF" id="PIRSF038186">
    <property type="entry name" value="ITPK"/>
    <property type="match status" value="1"/>
</dbReference>
<dbReference type="SUPFAM" id="SSF56059">
    <property type="entry name" value="Glutathione synthetase ATP-binding domain-like"/>
    <property type="match status" value="1"/>
</dbReference>
<dbReference type="PROSITE" id="PS50975">
    <property type="entry name" value="ATP_GRASP"/>
    <property type="match status" value="1"/>
</dbReference>
<evidence type="ECO:0000250" key="1">
    <source>
        <dbReference type="UniProtKB" id="Q13572"/>
    </source>
</evidence>
<evidence type="ECO:0000250" key="2">
    <source>
        <dbReference type="UniProtKB" id="Q9XYQ1"/>
    </source>
</evidence>
<evidence type="ECO:0000255" key="3">
    <source>
        <dbReference type="PROSITE-ProRule" id="PRU00409"/>
    </source>
</evidence>
<evidence type="ECO:0000256" key="4">
    <source>
        <dbReference type="SAM" id="MobiDB-lite"/>
    </source>
</evidence>
<evidence type="ECO:0000269" key="5">
    <source>
    </source>
</evidence>
<evidence type="ECO:0000269" key="6">
    <source>
    </source>
</evidence>
<evidence type="ECO:0000305" key="7"/>
<protein>
    <recommendedName>
        <fullName>Inositol-tetrakisphosphate 1-kinase 3</fullName>
        <ecNumber evidence="5">2.7.1.134</ecNumber>
    </recommendedName>
    <alternativeName>
        <fullName>Inositol 1,3,4-trisphosphate 5/6-kinase 3</fullName>
        <shortName>AtItpk-3</shortName>
        <shortName>Inositol-triphosphate 5/6-kinase 3</shortName>
        <shortName>Ins(1,3,4)P(3) 5/6-kinase 3</shortName>
        <ecNumber evidence="5">2.7.1.159</ecNumber>
    </alternativeName>
</protein>
<proteinExistence type="evidence at protein level"/>
<comment type="function">
    <text evidence="1 5">Kinase that can phosphorylate various inositol polyphosphate such as Ins(3,4,5,6)P4 or Ins(1,3,4)P3. Phosphorylates Ins(3,4,5,6)P4 to form InsP5 (PubMed:17698066). This reaction is thought to have regulatory importance, since Ins(3,4,5,6)P4 is an inhibitor of plasma membrane Ca(2+)-activated Cl(-) channels, while Ins(1,3,4,5,6)P5 is not (By similarity). Also phosphorylates Ins(1,3,4)P3 or a racemic mixture of Ins(1,4,6)P3 and Ins(3,4,6)P3 to form InsP4 (PubMed:17698066). Ins(1,3,4,6)P4 is an essential molecule in the hexakisphosphate (InsP6) pathway (By similarity).</text>
</comment>
<comment type="catalytic activity">
    <reaction evidence="5">
        <text>1D-myo-inositol 3,4,5,6-tetrakisphosphate + ATP = 1D-myo-inositol 1,3,4,5,6-pentakisphosphate + ADP + H(+)</text>
        <dbReference type="Rhea" id="RHEA:12452"/>
        <dbReference type="ChEBI" id="CHEBI:15378"/>
        <dbReference type="ChEBI" id="CHEBI:30616"/>
        <dbReference type="ChEBI" id="CHEBI:57539"/>
        <dbReference type="ChEBI" id="CHEBI:57733"/>
        <dbReference type="ChEBI" id="CHEBI:456216"/>
        <dbReference type="EC" id="2.7.1.134"/>
    </reaction>
</comment>
<comment type="catalytic activity">
    <reaction evidence="5">
        <text>1D-myo-inositol 1,3,4-trisphosphate + ATP = 1D-myo-inositol 1,3,4,5-tetrakisphosphate + ADP + H(+)</text>
        <dbReference type="Rhea" id="RHEA:13253"/>
        <dbReference type="ChEBI" id="CHEBI:15378"/>
        <dbReference type="ChEBI" id="CHEBI:30616"/>
        <dbReference type="ChEBI" id="CHEBI:57895"/>
        <dbReference type="ChEBI" id="CHEBI:58414"/>
        <dbReference type="ChEBI" id="CHEBI:456216"/>
        <dbReference type="EC" id="2.7.1.159"/>
    </reaction>
</comment>
<comment type="catalytic activity">
    <reaction evidence="5">
        <text>1D-myo-inositol 1,3,4-trisphosphate + ATP = 1D-myo-inositol 1,3,4,6-tetrakisphosphate + ADP + H(+)</text>
        <dbReference type="Rhea" id="RHEA:20940"/>
        <dbReference type="ChEBI" id="CHEBI:15378"/>
        <dbReference type="ChEBI" id="CHEBI:30616"/>
        <dbReference type="ChEBI" id="CHEBI:57660"/>
        <dbReference type="ChEBI" id="CHEBI:58414"/>
        <dbReference type="ChEBI" id="CHEBI:456216"/>
        <dbReference type="EC" id="2.7.1.159"/>
    </reaction>
</comment>
<comment type="cofactor">
    <cofactor evidence="1">
        <name>Mg(2+)</name>
        <dbReference type="ChEBI" id="CHEBI:18420"/>
    </cofactor>
    <text evidence="1">Binds 2 magnesium ions per subunit.</text>
</comment>
<comment type="subunit">
    <text evidence="1">Monomer.</text>
</comment>
<comment type="alternative products">
    <event type="alternative splicing"/>
    <isoform>
        <id>Q9SUG3-1</id>
        <name>1</name>
        <sequence type="displayed"/>
    </isoform>
    <isoform>
        <id>Q9SUG3-2</id>
        <name>2</name>
        <sequence type="described" ref="VSP_018095 VSP_018096"/>
    </isoform>
</comment>
<comment type="tissue specificity">
    <text evidence="5 6">Highly expressed in leaves and flowers, and at lower levels in roots, stems, cauline leaves and siliques.</text>
</comment>
<comment type="miscellaneous">
    <molecule>Isoform 2</molecule>
    <text evidence="7">May be due to an intron retention.</text>
</comment>
<comment type="similarity">
    <text evidence="7">Belongs to the ITPK1 family.</text>
</comment>
<comment type="sequence caution" evidence="7">
    <conflict type="erroneous gene model prediction">
        <sequence resource="EMBL-CDS" id="CAB45787"/>
    </conflict>
</comment>
<comment type="sequence caution" evidence="7">
    <conflict type="erroneous gene model prediction">
        <sequence resource="EMBL-CDS" id="CAB81153"/>
    </conflict>
</comment>
<reference key="1">
    <citation type="journal article" date="1999" name="Nature">
        <title>Sequence and analysis of chromosome 4 of the plant Arabidopsis thaliana.</title>
        <authorList>
            <person name="Mayer K.F.X."/>
            <person name="Schueller C."/>
            <person name="Wambutt R."/>
            <person name="Murphy G."/>
            <person name="Volckaert G."/>
            <person name="Pohl T."/>
            <person name="Duesterhoeft A."/>
            <person name="Stiekema W."/>
            <person name="Entian K.-D."/>
            <person name="Terryn N."/>
            <person name="Harris B."/>
            <person name="Ansorge W."/>
            <person name="Brandt P."/>
            <person name="Grivell L.A."/>
            <person name="Rieger M."/>
            <person name="Weichselgartner M."/>
            <person name="de Simone V."/>
            <person name="Obermaier B."/>
            <person name="Mache R."/>
            <person name="Mueller M."/>
            <person name="Kreis M."/>
            <person name="Delseny M."/>
            <person name="Puigdomenech P."/>
            <person name="Watson M."/>
            <person name="Schmidtheini T."/>
            <person name="Reichert B."/>
            <person name="Portetelle D."/>
            <person name="Perez-Alonso M."/>
            <person name="Boutry M."/>
            <person name="Bancroft I."/>
            <person name="Vos P."/>
            <person name="Hoheisel J."/>
            <person name="Zimmermann W."/>
            <person name="Wedler H."/>
            <person name="Ridley P."/>
            <person name="Langham S.-A."/>
            <person name="McCullagh B."/>
            <person name="Bilham L."/>
            <person name="Robben J."/>
            <person name="van der Schueren J."/>
            <person name="Grymonprez B."/>
            <person name="Chuang Y.-J."/>
            <person name="Vandenbussche F."/>
            <person name="Braeken M."/>
            <person name="Weltjens I."/>
            <person name="Voet M."/>
            <person name="Bastiaens I."/>
            <person name="Aert R."/>
            <person name="Defoor E."/>
            <person name="Weitzenegger T."/>
            <person name="Bothe G."/>
            <person name="Ramsperger U."/>
            <person name="Hilbert H."/>
            <person name="Braun M."/>
            <person name="Holzer E."/>
            <person name="Brandt A."/>
            <person name="Peters S."/>
            <person name="van Staveren M."/>
            <person name="Dirkse W."/>
            <person name="Mooijman P."/>
            <person name="Klein Lankhorst R."/>
            <person name="Rose M."/>
            <person name="Hauf J."/>
            <person name="Koetter P."/>
            <person name="Berneiser S."/>
            <person name="Hempel S."/>
            <person name="Feldpausch M."/>
            <person name="Lamberth S."/>
            <person name="Van den Daele H."/>
            <person name="De Keyser A."/>
            <person name="Buysshaert C."/>
            <person name="Gielen J."/>
            <person name="Villarroel R."/>
            <person name="De Clercq R."/>
            <person name="van Montagu M."/>
            <person name="Rogers J."/>
            <person name="Cronin A."/>
            <person name="Quail M.A."/>
            <person name="Bray-Allen S."/>
            <person name="Clark L."/>
            <person name="Doggett J."/>
            <person name="Hall S."/>
            <person name="Kay M."/>
            <person name="Lennard N."/>
            <person name="McLay K."/>
            <person name="Mayes R."/>
            <person name="Pettett A."/>
            <person name="Rajandream M.A."/>
            <person name="Lyne M."/>
            <person name="Benes V."/>
            <person name="Rechmann S."/>
            <person name="Borkova D."/>
            <person name="Bloecker H."/>
            <person name="Scharfe M."/>
            <person name="Grimm M."/>
            <person name="Loehnert T.-H."/>
            <person name="Dose S."/>
            <person name="de Haan M."/>
            <person name="Maarse A.C."/>
            <person name="Schaefer M."/>
            <person name="Mueller-Auer S."/>
            <person name="Gabel C."/>
            <person name="Fuchs M."/>
            <person name="Fartmann B."/>
            <person name="Granderath K."/>
            <person name="Dauner D."/>
            <person name="Herzl A."/>
            <person name="Neumann S."/>
            <person name="Argiriou A."/>
            <person name="Vitale D."/>
            <person name="Liguori R."/>
            <person name="Piravandi E."/>
            <person name="Massenet O."/>
            <person name="Quigley F."/>
            <person name="Clabauld G."/>
            <person name="Muendlein A."/>
            <person name="Felber R."/>
            <person name="Schnabl S."/>
            <person name="Hiller R."/>
            <person name="Schmidt W."/>
            <person name="Lecharny A."/>
            <person name="Aubourg S."/>
            <person name="Chefdor F."/>
            <person name="Cooke R."/>
            <person name="Berger C."/>
            <person name="Monfort A."/>
            <person name="Casacuberta E."/>
            <person name="Gibbons T."/>
            <person name="Weber N."/>
            <person name="Vandenbol M."/>
            <person name="Bargues M."/>
            <person name="Terol J."/>
            <person name="Torres A."/>
            <person name="Perez-Perez A."/>
            <person name="Purnelle B."/>
            <person name="Bent E."/>
            <person name="Johnson S."/>
            <person name="Tacon D."/>
            <person name="Jesse T."/>
            <person name="Heijnen L."/>
            <person name="Schwarz S."/>
            <person name="Scholler P."/>
            <person name="Heber S."/>
            <person name="Francs P."/>
            <person name="Bielke C."/>
            <person name="Frishman D."/>
            <person name="Haase D."/>
            <person name="Lemcke K."/>
            <person name="Mewes H.-W."/>
            <person name="Stocker S."/>
            <person name="Zaccaria P."/>
            <person name="Bevan M."/>
            <person name="Wilson R.K."/>
            <person name="de la Bastide M."/>
            <person name="Habermann K."/>
            <person name="Parnell L."/>
            <person name="Dedhia N."/>
            <person name="Gnoj L."/>
            <person name="Schutz K."/>
            <person name="Huang E."/>
            <person name="Spiegel L."/>
            <person name="Sekhon M."/>
            <person name="Murray J."/>
            <person name="Sheet P."/>
            <person name="Cordes M."/>
            <person name="Abu-Threideh J."/>
            <person name="Stoneking T."/>
            <person name="Kalicki J."/>
            <person name="Graves T."/>
            <person name="Harmon G."/>
            <person name="Edwards J."/>
            <person name="Latreille P."/>
            <person name="Courtney L."/>
            <person name="Cloud J."/>
            <person name="Abbott A."/>
            <person name="Scott K."/>
            <person name="Johnson D."/>
            <person name="Minx P."/>
            <person name="Bentley D."/>
            <person name="Fulton B."/>
            <person name="Miller N."/>
            <person name="Greco T."/>
            <person name="Kemp K."/>
            <person name="Kramer J."/>
            <person name="Fulton L."/>
            <person name="Mardis E."/>
            <person name="Dante M."/>
            <person name="Pepin K."/>
            <person name="Hillier L.W."/>
            <person name="Nelson J."/>
            <person name="Spieth J."/>
            <person name="Ryan E."/>
            <person name="Andrews S."/>
            <person name="Geisel C."/>
            <person name="Layman D."/>
            <person name="Du H."/>
            <person name="Ali J."/>
            <person name="Berghoff A."/>
            <person name="Jones K."/>
            <person name="Drone K."/>
            <person name="Cotton M."/>
            <person name="Joshu C."/>
            <person name="Antonoiu B."/>
            <person name="Zidanic M."/>
            <person name="Strong C."/>
            <person name="Sun H."/>
            <person name="Lamar B."/>
            <person name="Yordan C."/>
            <person name="Ma P."/>
            <person name="Zhong J."/>
            <person name="Preston R."/>
            <person name="Vil D."/>
            <person name="Shekher M."/>
            <person name="Matero A."/>
            <person name="Shah R."/>
            <person name="Swaby I.K."/>
            <person name="O'Shaughnessy A."/>
            <person name="Rodriguez M."/>
            <person name="Hoffman J."/>
            <person name="Till S."/>
            <person name="Granat S."/>
            <person name="Shohdy N."/>
            <person name="Hasegawa A."/>
            <person name="Hameed A."/>
            <person name="Lodhi M."/>
            <person name="Johnson A."/>
            <person name="Chen E."/>
            <person name="Marra M.A."/>
            <person name="Martienssen R."/>
            <person name="McCombie W.R."/>
        </authorList>
    </citation>
    <scope>NUCLEOTIDE SEQUENCE [LARGE SCALE GENOMIC DNA]</scope>
    <source>
        <strain>cv. Columbia</strain>
    </source>
</reference>
<reference key="2">
    <citation type="journal article" date="2017" name="Plant J.">
        <title>Araport11: a complete reannotation of the Arabidopsis thaliana reference genome.</title>
        <authorList>
            <person name="Cheng C.Y."/>
            <person name="Krishnakumar V."/>
            <person name="Chan A.P."/>
            <person name="Thibaud-Nissen F."/>
            <person name="Schobel S."/>
            <person name="Town C.D."/>
        </authorList>
    </citation>
    <scope>GENOME REANNOTATION</scope>
    <source>
        <strain>cv. Columbia</strain>
    </source>
</reference>
<reference key="3">
    <citation type="journal article" date="2003" name="Science">
        <title>Empirical analysis of transcriptional activity in the Arabidopsis genome.</title>
        <authorList>
            <person name="Yamada K."/>
            <person name="Lim J."/>
            <person name="Dale J.M."/>
            <person name="Chen H."/>
            <person name="Shinn P."/>
            <person name="Palm C.J."/>
            <person name="Southwick A.M."/>
            <person name="Wu H.C."/>
            <person name="Kim C.J."/>
            <person name="Nguyen M."/>
            <person name="Pham P.K."/>
            <person name="Cheuk R.F."/>
            <person name="Karlin-Newmann G."/>
            <person name="Liu S.X."/>
            <person name="Lam B."/>
            <person name="Sakano H."/>
            <person name="Wu T."/>
            <person name="Yu G."/>
            <person name="Miranda M."/>
            <person name="Quach H.L."/>
            <person name="Tripp M."/>
            <person name="Chang C.H."/>
            <person name="Lee J.M."/>
            <person name="Toriumi M.J."/>
            <person name="Chan M.M."/>
            <person name="Tang C.C."/>
            <person name="Onodera C.S."/>
            <person name="Deng J.M."/>
            <person name="Akiyama K."/>
            <person name="Ansari Y."/>
            <person name="Arakawa T."/>
            <person name="Banh J."/>
            <person name="Banno F."/>
            <person name="Bowser L."/>
            <person name="Brooks S.Y."/>
            <person name="Carninci P."/>
            <person name="Chao Q."/>
            <person name="Choy N."/>
            <person name="Enju A."/>
            <person name="Goldsmith A.D."/>
            <person name="Gurjal M."/>
            <person name="Hansen N.F."/>
            <person name="Hayashizaki Y."/>
            <person name="Johnson-Hopson C."/>
            <person name="Hsuan V.W."/>
            <person name="Iida K."/>
            <person name="Karnes M."/>
            <person name="Khan S."/>
            <person name="Koesema E."/>
            <person name="Ishida J."/>
            <person name="Jiang P.X."/>
            <person name="Jones T."/>
            <person name="Kawai J."/>
            <person name="Kamiya A."/>
            <person name="Meyers C."/>
            <person name="Nakajima M."/>
            <person name="Narusaka M."/>
            <person name="Seki M."/>
            <person name="Sakurai T."/>
            <person name="Satou M."/>
            <person name="Tamse R."/>
            <person name="Vaysberg M."/>
            <person name="Wallender E.K."/>
            <person name="Wong C."/>
            <person name="Yamamura Y."/>
            <person name="Yuan S."/>
            <person name="Shinozaki K."/>
            <person name="Davis R.W."/>
            <person name="Theologis A."/>
            <person name="Ecker J.R."/>
        </authorList>
    </citation>
    <scope>NUCLEOTIDE SEQUENCE [LARGE SCALE MRNA] (ISOFORM 1)</scope>
    <source>
        <strain>cv. Columbia</strain>
    </source>
</reference>
<reference key="4">
    <citation type="journal article" date="2007" name="FEBS Lett.">
        <title>Arabidopsis thaliana inositol 1,3,4-trisphosphate 5/6-kinase 4 (AtITPK4) is an outlier to a family of ATP-grasp fold proteins from Arabidopsis.</title>
        <authorList>
            <person name="Sweetman D."/>
            <person name="Stavridou I."/>
            <person name="Johnson S."/>
            <person name="Green P."/>
            <person name="Caddick S.E."/>
            <person name="Brearley C.A."/>
        </authorList>
    </citation>
    <scope>FUNCTION</scope>
    <scope>CATALYTIC ACTIVITY</scope>
    <scope>TISSUE SPECIFICITY</scope>
</reference>
<reference key="5">
    <citation type="journal article" date="2013" name="Acta Biochim. Biophys. Sin.">
        <title>Arabidopsis inositol 1,3,4-trisphosphate 5/6 kinase 2 is required for seed coat development.</title>
        <authorList>
            <person name="Tang Y."/>
            <person name="Tan S."/>
            <person name="Xue H."/>
        </authorList>
    </citation>
    <scope>TISSUE SPECIFICITY</scope>
</reference>
<sequence>MKLTDNEEITMNGTREMETTEQETSSPCSLVIEAFPVKKSIIVGYALTSKKIKSFLQPKLEGLARNKGILFVAIDQNKPLSEQGPFDIVLHKQIGKEWRRILEEFRLAHPDVTVLDPPDAILHLRNRQSMLQCVADMNLSDSNGRVGVPKQLVIKKDASSIPEAVNNAGLRLPLVAKPLVADGSAKSHELSLAYDQHSLLKLEPPLVLQEFVNHGGVLFKVYIVGEAIRVVRRFSLPDVSRRELPKSAGVFRFPRVSCAAASADDADLDPSIAELPPRPLLERLAKELRRGLGLRLFNLDIIREHGTRDRFYVIDINYFPGYGKMPEYEHVFTDFLLSVVQSQCKKRALADQY</sequence>
<accession>Q9SUG3</accession>
<accession>Q3EA71</accession>
<accession>Q93VQ8</accession>
<name>ITPK3_ARATH</name>